<feature type="chain" id="PRO_0000051582" description="Histone acetyltransferase KAT5">
    <location>
        <begin position="1"/>
        <end position="513"/>
    </location>
</feature>
<feature type="domain" description="Tudor-knot" evidence="4">
    <location>
        <begin position="8"/>
        <end position="65"/>
    </location>
</feature>
<feature type="domain" description="MYST-type HAT" evidence="5">
    <location>
        <begin position="227"/>
        <end position="504"/>
    </location>
</feature>
<feature type="zinc finger region" description="C2HC MYST-type" evidence="5">
    <location>
        <begin position="260"/>
        <end position="285"/>
    </location>
</feature>
<feature type="region of interest" description="Disordered" evidence="6">
    <location>
        <begin position="69"/>
        <end position="106"/>
    </location>
</feature>
<feature type="region of interest" description="Disordered" evidence="6">
    <location>
        <begin position="122"/>
        <end position="217"/>
    </location>
</feature>
<feature type="region of interest" description="Interaction with ATF2" evidence="2">
    <location>
        <begin position="368"/>
        <end position="513"/>
    </location>
</feature>
<feature type="compositionally biased region" description="Polar residues" evidence="6">
    <location>
        <begin position="133"/>
        <end position="144"/>
    </location>
</feature>
<feature type="active site" description="Proton donor/acceptor" evidence="3">
    <location>
        <position position="403"/>
    </location>
</feature>
<feature type="binding site" evidence="3">
    <location>
        <begin position="370"/>
        <end position="372"/>
    </location>
    <ligand>
        <name>acetyl-CoA</name>
        <dbReference type="ChEBI" id="CHEBI:57288"/>
    </ligand>
</feature>
<feature type="binding site" evidence="3">
    <location>
        <begin position="377"/>
        <end position="383"/>
    </location>
    <ligand>
        <name>acetyl-CoA</name>
        <dbReference type="ChEBI" id="CHEBI:57288"/>
    </ligand>
</feature>
<feature type="binding site" evidence="3">
    <location>
        <position position="407"/>
    </location>
    <ligand>
        <name>acetyl-CoA</name>
        <dbReference type="ChEBI" id="CHEBI:57288"/>
    </ligand>
</feature>
<feature type="binding site" evidence="3">
    <location>
        <position position="416"/>
    </location>
    <ligand>
        <name>acetyl-CoA</name>
        <dbReference type="ChEBI" id="CHEBI:57288"/>
    </ligand>
</feature>
<feature type="modified residue" description="N6-acetyllysine" evidence="2">
    <location>
        <position position="52"/>
    </location>
</feature>
<feature type="modified residue" description="Phosphoserine" evidence="2">
    <location>
        <position position="86"/>
    </location>
</feature>
<feature type="modified residue" description="Phosphoserine" evidence="2">
    <location>
        <position position="90"/>
    </location>
</feature>
<feature type="modified residue" description="N6-acetyllysine; by autocatalysis" evidence="2">
    <location>
        <position position="104"/>
    </location>
</feature>
<feature type="modified residue" description="N6-acetyllysine; by autocatalysis" evidence="2">
    <location>
        <position position="120"/>
    </location>
</feature>
<feature type="modified residue" description="N6-acetyllysine; by autocatalysis" evidence="2">
    <location>
        <position position="148"/>
    </location>
</feature>
<feature type="modified residue" description="N6-acetyllysine; by autocatalysis" evidence="2">
    <location>
        <position position="150"/>
    </location>
</feature>
<feature type="modified residue" description="N6-acetyllysine; by autocatalysis" evidence="2">
    <location>
        <position position="187"/>
    </location>
</feature>
<feature type="modified residue" description="N6-acetyllysine; by autocatalysis" evidence="2">
    <location>
        <position position="189"/>
    </location>
</feature>
<feature type="modified residue" description="Phosphoserine" evidence="2">
    <location>
        <position position="199"/>
    </location>
</feature>
<feature type="modified residue" description="N6-acetyllysine; by autocatalysis" evidence="2">
    <location>
        <position position="327"/>
    </location>
</feature>
<feature type="cross-link" description="Glycyl lysine isopeptide (Lys-Gly) (interchain with G-Cter in SUMO1); alternate" evidence="2">
    <location>
        <position position="430"/>
    </location>
</feature>
<feature type="cross-link" description="Glycyl lysine isopeptide (Lys-Gly) (interchain with G-Cter in SUMO2); alternate" evidence="2">
    <location>
        <position position="430"/>
    </location>
</feature>
<feature type="cross-link" description="Glycyl lysine isopeptide (Lys-Gly) (interchain with G-Cter in SUMO1)" evidence="2">
    <location>
        <position position="451"/>
    </location>
</feature>
<feature type="splice variant" id="VSP_019781" description="In isoform 2." evidence="9">
    <location>
        <begin position="96"/>
        <end position="147"/>
    </location>
</feature>
<proteinExistence type="evidence at protein level"/>
<evidence type="ECO:0000250" key="1">
    <source>
        <dbReference type="UniProtKB" id="Q8CHK4"/>
    </source>
</evidence>
<evidence type="ECO:0000250" key="2">
    <source>
        <dbReference type="UniProtKB" id="Q92993"/>
    </source>
</evidence>
<evidence type="ECO:0000250" key="3">
    <source>
        <dbReference type="UniProtKB" id="Q9H7Z6"/>
    </source>
</evidence>
<evidence type="ECO:0000255" key="4"/>
<evidence type="ECO:0000255" key="5">
    <source>
        <dbReference type="PROSITE-ProRule" id="PRU01063"/>
    </source>
</evidence>
<evidence type="ECO:0000256" key="6">
    <source>
        <dbReference type="SAM" id="MobiDB-lite"/>
    </source>
</evidence>
<evidence type="ECO:0000269" key="7">
    <source>
    </source>
</evidence>
<evidence type="ECO:0000269" key="8">
    <source>
    </source>
</evidence>
<evidence type="ECO:0000303" key="9">
    <source>
    </source>
</evidence>
<evidence type="ECO:0000305" key="10"/>
<evidence type="ECO:0000312" key="11">
    <source>
        <dbReference type="RGD" id="621061"/>
    </source>
</evidence>
<name>KAT5_RAT</name>
<dbReference type="EC" id="2.3.1.48" evidence="2"/>
<dbReference type="EC" id="2.3.1.-" evidence="2"/>
<dbReference type="EMBL" id="BC083879">
    <property type="protein sequence ID" value="AAH83879.1"/>
    <property type="molecule type" value="mRNA"/>
</dbReference>
<dbReference type="EMBL" id="AF333984">
    <property type="protein sequence ID" value="AAK20836.1"/>
    <property type="molecule type" value="mRNA"/>
</dbReference>
<dbReference type="RefSeq" id="NP_001005872.1">
    <molecule id="Q99MK2-1"/>
    <property type="nucleotide sequence ID" value="NM_001005872.1"/>
</dbReference>
<dbReference type="RefSeq" id="XP_038948655.1">
    <molecule id="Q99MK2-2"/>
    <property type="nucleotide sequence ID" value="XM_039092727.2"/>
</dbReference>
<dbReference type="SMR" id="Q99MK2"/>
<dbReference type="BioGRID" id="251357">
    <property type="interactions" value="1"/>
</dbReference>
<dbReference type="FunCoup" id="Q99MK2">
    <property type="interactions" value="2822"/>
</dbReference>
<dbReference type="STRING" id="10116.ENSRNOP00000075290"/>
<dbReference type="ChEMBL" id="CHEMBL1932911"/>
<dbReference type="iPTMnet" id="Q99MK2"/>
<dbReference type="PhosphoSitePlus" id="Q99MK2"/>
<dbReference type="PaxDb" id="10116-ENSRNOP00000039632"/>
<dbReference type="Ensembl" id="ENSRNOT00000088799.2">
    <molecule id="Q99MK2-1"/>
    <property type="protein sequence ID" value="ENSRNOP00000075290.2"/>
    <property type="gene ID" value="ENSRNOG00000061012.2"/>
</dbReference>
<dbReference type="GeneID" id="192218"/>
<dbReference type="KEGG" id="rno:192218"/>
<dbReference type="UCSC" id="RGD:621061">
    <molecule id="Q99MK2-1"/>
    <property type="organism name" value="rat"/>
</dbReference>
<dbReference type="AGR" id="RGD:621061"/>
<dbReference type="CTD" id="10524"/>
<dbReference type="RGD" id="621061">
    <property type="gene designation" value="Kat5"/>
</dbReference>
<dbReference type="eggNOG" id="KOG2747">
    <property type="taxonomic scope" value="Eukaryota"/>
</dbReference>
<dbReference type="GeneTree" id="ENSGT00940000162343"/>
<dbReference type="InParanoid" id="Q99MK2"/>
<dbReference type="PhylomeDB" id="Q99MK2"/>
<dbReference type="Reactome" id="R-RNO-201722">
    <property type="pathway name" value="Formation of the beta-catenin:TCF transactivating complex"/>
</dbReference>
<dbReference type="Reactome" id="R-RNO-2559586">
    <property type="pathway name" value="DNA Damage/Telomere Stress Induced Senescence"/>
</dbReference>
<dbReference type="Reactome" id="R-RNO-5685938">
    <property type="pathway name" value="HDR through Single Strand Annealing (SSA)"/>
</dbReference>
<dbReference type="Reactome" id="R-RNO-5685942">
    <property type="pathway name" value="HDR through Homologous Recombination (HRR)"/>
</dbReference>
<dbReference type="Reactome" id="R-RNO-5693548">
    <property type="pathway name" value="Sensing of DNA Double Strand Breaks"/>
</dbReference>
<dbReference type="Reactome" id="R-RNO-5693565">
    <property type="pathway name" value="Recruitment and ATM-mediated phosphorylation of repair and signaling proteins at DNA double strand breaks"/>
</dbReference>
<dbReference type="Reactome" id="R-RNO-5693568">
    <property type="pathway name" value="Resolution of D-loop Structures through Holliday Junction Intermediates"/>
</dbReference>
<dbReference type="Reactome" id="R-RNO-5693571">
    <property type="pathway name" value="Nonhomologous End-Joining (NHEJ)"/>
</dbReference>
<dbReference type="Reactome" id="R-RNO-5693579">
    <property type="pathway name" value="Homologous DNA Pairing and Strand Exchange"/>
</dbReference>
<dbReference type="Reactome" id="R-RNO-5693607">
    <property type="pathway name" value="Processing of DNA double-strand break ends"/>
</dbReference>
<dbReference type="Reactome" id="R-RNO-5693616">
    <property type="pathway name" value="Presynaptic phase of homologous DNA pairing and strand exchange"/>
</dbReference>
<dbReference type="Reactome" id="R-RNO-6804756">
    <property type="pathway name" value="Regulation of TP53 Activity through Phosphorylation"/>
</dbReference>
<dbReference type="Reactome" id="R-RNO-69473">
    <property type="pathway name" value="G2/M DNA damage checkpoint"/>
</dbReference>
<dbReference type="Reactome" id="R-RNO-9018519">
    <property type="pathway name" value="Estrogen-dependent gene expression"/>
</dbReference>
<dbReference type="PRO" id="PR:Q99MK2"/>
<dbReference type="Proteomes" id="UP000002494">
    <property type="component" value="Chromosome 1"/>
</dbReference>
<dbReference type="GO" id="GO:0000785">
    <property type="term" value="C:chromatin"/>
    <property type="evidence" value="ECO:0000314"/>
    <property type="project" value="RGD"/>
</dbReference>
<dbReference type="GO" id="GO:0005737">
    <property type="term" value="C:cytoplasm"/>
    <property type="evidence" value="ECO:0000266"/>
    <property type="project" value="RGD"/>
</dbReference>
<dbReference type="GO" id="GO:0000776">
    <property type="term" value="C:kinetochore"/>
    <property type="evidence" value="ECO:0000250"/>
    <property type="project" value="UniProtKB"/>
</dbReference>
<dbReference type="GO" id="GO:0097431">
    <property type="term" value="C:mitotic spindle pole"/>
    <property type="evidence" value="ECO:0000266"/>
    <property type="project" value="RGD"/>
</dbReference>
<dbReference type="GO" id="GO:0035267">
    <property type="term" value="C:NuA4 histone acetyltransferase complex"/>
    <property type="evidence" value="ECO:0000250"/>
    <property type="project" value="UniProtKB"/>
</dbReference>
<dbReference type="GO" id="GO:0005730">
    <property type="term" value="C:nucleolus"/>
    <property type="evidence" value="ECO:0000250"/>
    <property type="project" value="UniProtKB"/>
</dbReference>
<dbReference type="GO" id="GO:0005654">
    <property type="term" value="C:nucleoplasm"/>
    <property type="evidence" value="ECO:0000304"/>
    <property type="project" value="Reactome"/>
</dbReference>
<dbReference type="GO" id="GO:0000786">
    <property type="term" value="C:nucleosome"/>
    <property type="evidence" value="ECO:0000266"/>
    <property type="project" value="RGD"/>
</dbReference>
<dbReference type="GO" id="GO:0005634">
    <property type="term" value="C:nucleus"/>
    <property type="evidence" value="ECO:0000266"/>
    <property type="project" value="RGD"/>
</dbReference>
<dbReference type="GO" id="GO:0048471">
    <property type="term" value="C:perinuclear region of cytoplasm"/>
    <property type="evidence" value="ECO:0007669"/>
    <property type="project" value="UniProtKB-SubCell"/>
</dbReference>
<dbReference type="GO" id="GO:0032777">
    <property type="term" value="C:piccolo histone acetyltransferase complex"/>
    <property type="evidence" value="ECO:0000250"/>
    <property type="project" value="UniProtKB"/>
</dbReference>
<dbReference type="GO" id="GO:0032991">
    <property type="term" value="C:protein-containing complex"/>
    <property type="evidence" value="ECO:0000314"/>
    <property type="project" value="RGD"/>
</dbReference>
<dbReference type="GO" id="GO:0035861">
    <property type="term" value="C:site of double-strand break"/>
    <property type="evidence" value="ECO:0000266"/>
    <property type="project" value="RGD"/>
</dbReference>
<dbReference type="GO" id="GO:0000812">
    <property type="term" value="C:Swr1 complex"/>
    <property type="evidence" value="ECO:0000250"/>
    <property type="project" value="UniProtKB"/>
</dbReference>
<dbReference type="GO" id="GO:0005667">
    <property type="term" value="C:transcription regulator complex"/>
    <property type="evidence" value="ECO:0000266"/>
    <property type="project" value="RGD"/>
</dbReference>
<dbReference type="GO" id="GO:0003682">
    <property type="term" value="F:chromatin binding"/>
    <property type="evidence" value="ECO:0000314"/>
    <property type="project" value="RGD"/>
</dbReference>
<dbReference type="GO" id="GO:0140297">
    <property type="term" value="F:DNA-binding transcription factor binding"/>
    <property type="evidence" value="ECO:0000266"/>
    <property type="project" value="RGD"/>
</dbReference>
<dbReference type="GO" id="GO:0004402">
    <property type="term" value="F:histone acetyltransferase activity"/>
    <property type="evidence" value="ECO:0000250"/>
    <property type="project" value="UniProtKB"/>
</dbReference>
<dbReference type="GO" id="GO:0043998">
    <property type="term" value="F:histone H2A acetyltransferase activity"/>
    <property type="evidence" value="ECO:0000250"/>
    <property type="project" value="UniProtKB"/>
</dbReference>
<dbReference type="GO" id="GO:0043999">
    <property type="term" value="F:histone H2AK5 acetyltransferase activity"/>
    <property type="evidence" value="ECO:0000266"/>
    <property type="project" value="RGD"/>
</dbReference>
<dbReference type="GO" id="GO:0010485">
    <property type="term" value="F:histone H4 acetyltransferase activity"/>
    <property type="evidence" value="ECO:0000266"/>
    <property type="project" value="RGD"/>
</dbReference>
<dbReference type="GO" id="GO:0046972">
    <property type="term" value="F:histone H4K16 acetyltransferase activity"/>
    <property type="evidence" value="ECO:0000266"/>
    <property type="project" value="RGD"/>
</dbReference>
<dbReference type="GO" id="GO:0106226">
    <property type="term" value="F:peptide 2-hydroxyisobutyryltransferase activity"/>
    <property type="evidence" value="ECO:0007669"/>
    <property type="project" value="RHEA"/>
</dbReference>
<dbReference type="GO" id="GO:0140065">
    <property type="term" value="F:peptide butyryltransferase activity"/>
    <property type="evidence" value="ECO:0000250"/>
    <property type="project" value="UniProtKB"/>
</dbReference>
<dbReference type="GO" id="GO:0140064">
    <property type="term" value="F:peptide crotonyltransferase activity"/>
    <property type="evidence" value="ECO:0000250"/>
    <property type="project" value="UniProtKB"/>
</dbReference>
<dbReference type="GO" id="GO:0120300">
    <property type="term" value="F:peptide lactyltransferase (CoA-dependent) activity"/>
    <property type="evidence" value="ECO:0000250"/>
    <property type="project" value="UniProtKB"/>
</dbReference>
<dbReference type="GO" id="GO:0043274">
    <property type="term" value="F:phospholipase binding"/>
    <property type="evidence" value="ECO:0000353"/>
    <property type="project" value="RGD"/>
</dbReference>
<dbReference type="GO" id="GO:0044877">
    <property type="term" value="F:protein-containing complex binding"/>
    <property type="evidence" value="ECO:0000353"/>
    <property type="project" value="RGD"/>
</dbReference>
<dbReference type="GO" id="GO:0061733">
    <property type="term" value="F:protein-lysine-acetyltransferase activity"/>
    <property type="evidence" value="ECO:0000250"/>
    <property type="project" value="UniProtKB"/>
</dbReference>
<dbReference type="GO" id="GO:0003713">
    <property type="term" value="F:transcription coactivator activity"/>
    <property type="evidence" value="ECO:0000250"/>
    <property type="project" value="UniProtKB"/>
</dbReference>
<dbReference type="GO" id="GO:0008270">
    <property type="term" value="F:zinc ion binding"/>
    <property type="evidence" value="ECO:0007669"/>
    <property type="project" value="UniProtKB-KW"/>
</dbReference>
<dbReference type="GO" id="GO:0006915">
    <property type="term" value="P:apoptotic process"/>
    <property type="evidence" value="ECO:0000266"/>
    <property type="project" value="RGD"/>
</dbReference>
<dbReference type="GO" id="GO:0071392">
    <property type="term" value="P:cellular response to estradiol stimulus"/>
    <property type="evidence" value="ECO:0000266"/>
    <property type="project" value="RGD"/>
</dbReference>
<dbReference type="GO" id="GO:0042149">
    <property type="term" value="P:cellular response to glucose starvation"/>
    <property type="evidence" value="ECO:0000250"/>
    <property type="project" value="UniProtKB"/>
</dbReference>
<dbReference type="GO" id="GO:0071333">
    <property type="term" value="P:cellular response to glucose stimulus"/>
    <property type="evidence" value="ECO:0000266"/>
    <property type="project" value="RGD"/>
</dbReference>
<dbReference type="GO" id="GO:0070301">
    <property type="term" value="P:cellular response to hydrogen peroxide"/>
    <property type="evidence" value="ECO:0000270"/>
    <property type="project" value="RGD"/>
</dbReference>
<dbReference type="GO" id="GO:0071481">
    <property type="term" value="P:cellular response to X-ray"/>
    <property type="evidence" value="ECO:0000270"/>
    <property type="project" value="RGD"/>
</dbReference>
<dbReference type="GO" id="GO:0006974">
    <property type="term" value="P:DNA damage response"/>
    <property type="evidence" value="ECO:0000250"/>
    <property type="project" value="UniProtKB"/>
</dbReference>
<dbReference type="GO" id="GO:0030330">
    <property type="term" value="P:DNA damage response, signal transduction by p53 class mediator"/>
    <property type="evidence" value="ECO:0000250"/>
    <property type="project" value="UniProtKB"/>
</dbReference>
<dbReference type="GO" id="GO:0140861">
    <property type="term" value="P:DNA repair-dependent chromatin remodeling"/>
    <property type="evidence" value="ECO:0000266"/>
    <property type="project" value="RGD"/>
</dbReference>
<dbReference type="GO" id="GO:0006302">
    <property type="term" value="P:double-strand break repair"/>
    <property type="evidence" value="ECO:0000250"/>
    <property type="project" value="UniProtKB"/>
</dbReference>
<dbReference type="GO" id="GO:0000724">
    <property type="term" value="P:double-strand break repair via homologous recombination"/>
    <property type="evidence" value="ECO:0000250"/>
    <property type="project" value="UniProtKB"/>
</dbReference>
<dbReference type="GO" id="GO:0000132">
    <property type="term" value="P:establishment of mitotic spindle orientation"/>
    <property type="evidence" value="ECO:0000250"/>
    <property type="project" value="UniProtKB"/>
</dbReference>
<dbReference type="GO" id="GO:0045087">
    <property type="term" value="P:innate immune response"/>
    <property type="evidence" value="ECO:0007669"/>
    <property type="project" value="UniProtKB-KW"/>
</dbReference>
<dbReference type="GO" id="GO:1905691">
    <property type="term" value="P:lipid droplet disassembly"/>
    <property type="evidence" value="ECO:0000250"/>
    <property type="project" value="UniProtKB"/>
</dbReference>
<dbReference type="GO" id="GO:0045892">
    <property type="term" value="P:negative regulation of DNA-templated transcription"/>
    <property type="evidence" value="ECO:0000266"/>
    <property type="project" value="RGD"/>
</dbReference>
<dbReference type="GO" id="GO:2000042">
    <property type="term" value="P:negative regulation of double-strand break repair via homologous recombination"/>
    <property type="evidence" value="ECO:0000266"/>
    <property type="project" value="RGD"/>
</dbReference>
<dbReference type="GO" id="GO:0032703">
    <property type="term" value="P:negative regulation of interleukin-2 production"/>
    <property type="evidence" value="ECO:0000266"/>
    <property type="project" value="RGD"/>
</dbReference>
<dbReference type="GO" id="GO:0000122">
    <property type="term" value="P:negative regulation of transcription by RNA polymerase II"/>
    <property type="evidence" value="ECO:0000266"/>
    <property type="project" value="RGD"/>
</dbReference>
<dbReference type="GO" id="GO:0021915">
    <property type="term" value="P:neural tube development"/>
    <property type="evidence" value="ECO:0000266"/>
    <property type="project" value="RGD"/>
</dbReference>
<dbReference type="GO" id="GO:0022008">
    <property type="term" value="P:neurogenesis"/>
    <property type="evidence" value="ECO:0000266"/>
    <property type="project" value="RGD"/>
</dbReference>
<dbReference type="GO" id="GO:0006289">
    <property type="term" value="P:nucleotide-excision repair"/>
    <property type="evidence" value="ECO:0000250"/>
    <property type="project" value="UniProtKB"/>
</dbReference>
<dbReference type="GO" id="GO:0018394">
    <property type="term" value="P:peptidyl-lysine acetylation"/>
    <property type="evidence" value="ECO:0000250"/>
    <property type="project" value="UniProtKB"/>
</dbReference>
<dbReference type="GO" id="GO:1905337">
    <property type="term" value="P:positive regulation of aggrephagy"/>
    <property type="evidence" value="ECO:0000266"/>
    <property type="project" value="RGD"/>
</dbReference>
<dbReference type="GO" id="GO:1902425">
    <property type="term" value="P:positive regulation of attachment of mitotic spindle microtubules to kinetochore"/>
    <property type="evidence" value="ECO:0000250"/>
    <property type="project" value="UniProtKB"/>
</dbReference>
<dbReference type="GO" id="GO:0010508">
    <property type="term" value="P:positive regulation of autophagy"/>
    <property type="evidence" value="ECO:0000250"/>
    <property type="project" value="UniProtKB"/>
</dbReference>
<dbReference type="GO" id="GO:0042753">
    <property type="term" value="P:positive regulation of circadian rhythm"/>
    <property type="evidence" value="ECO:0000250"/>
    <property type="project" value="UniProtKB"/>
</dbReference>
<dbReference type="GO" id="GO:0045893">
    <property type="term" value="P:positive regulation of DNA-templated transcription"/>
    <property type="evidence" value="ECO:0000250"/>
    <property type="project" value="UniProtKB"/>
</dbReference>
<dbReference type="GO" id="GO:1905168">
    <property type="term" value="P:positive regulation of double-strand break repair via homologous recombination"/>
    <property type="evidence" value="ECO:0000250"/>
    <property type="project" value="UniProtKB"/>
</dbReference>
<dbReference type="GO" id="GO:0062033">
    <property type="term" value="P:positive regulation of mitotic sister chromatid segregation"/>
    <property type="evidence" value="ECO:0000250"/>
    <property type="project" value="UniProtKB"/>
</dbReference>
<dbReference type="GO" id="GO:0045663">
    <property type="term" value="P:positive regulation of myoblast differentiation"/>
    <property type="evidence" value="ECO:0000250"/>
    <property type="project" value="UniProtKB"/>
</dbReference>
<dbReference type="GO" id="GO:0045591">
    <property type="term" value="P:positive regulation of regulatory T cell differentiation"/>
    <property type="evidence" value="ECO:0000250"/>
    <property type="project" value="UniProtKB"/>
</dbReference>
<dbReference type="GO" id="GO:0045944">
    <property type="term" value="P:positive regulation of transcription by RNA polymerase II"/>
    <property type="evidence" value="ECO:0000314"/>
    <property type="project" value="RGD"/>
</dbReference>
<dbReference type="GO" id="GO:0010867">
    <property type="term" value="P:positive regulation of triglyceride biosynthetic process"/>
    <property type="evidence" value="ECO:0000250"/>
    <property type="project" value="UniProtKB"/>
</dbReference>
<dbReference type="GO" id="GO:0043161">
    <property type="term" value="P:proteasome-mediated ubiquitin-dependent protein catabolic process"/>
    <property type="evidence" value="ECO:0000266"/>
    <property type="project" value="RGD"/>
</dbReference>
<dbReference type="GO" id="GO:0036211">
    <property type="term" value="P:protein modification process"/>
    <property type="evidence" value="ECO:0000315"/>
    <property type="project" value="RGD"/>
</dbReference>
<dbReference type="GO" id="GO:0051726">
    <property type="term" value="P:regulation of cell cycle"/>
    <property type="evidence" value="ECO:0000266"/>
    <property type="project" value="RGD"/>
</dbReference>
<dbReference type="GO" id="GO:1902036">
    <property type="term" value="P:regulation of hematopoietic stem cell differentiation"/>
    <property type="evidence" value="ECO:0000250"/>
    <property type="project" value="UniProtKB"/>
</dbReference>
<dbReference type="GO" id="GO:0006357">
    <property type="term" value="P:regulation of transcription by RNA polymerase II"/>
    <property type="evidence" value="ECO:0000266"/>
    <property type="project" value="RGD"/>
</dbReference>
<dbReference type="GO" id="GO:0010212">
    <property type="term" value="P:response to ionizing radiation"/>
    <property type="evidence" value="ECO:0000266"/>
    <property type="project" value="RGD"/>
</dbReference>
<dbReference type="GO" id="GO:0035092">
    <property type="term" value="P:sperm DNA condensation"/>
    <property type="evidence" value="ECO:0000266"/>
    <property type="project" value="RGD"/>
</dbReference>
<dbReference type="GO" id="GO:0007286">
    <property type="term" value="P:spermatid development"/>
    <property type="evidence" value="ECO:0000250"/>
    <property type="project" value="UniProtKB"/>
</dbReference>
<dbReference type="CDD" id="cd18985">
    <property type="entry name" value="CBD_TIP60_like"/>
    <property type="match status" value="1"/>
</dbReference>
<dbReference type="CDD" id="cd04301">
    <property type="entry name" value="NAT_SF"/>
    <property type="match status" value="1"/>
</dbReference>
<dbReference type="FunFam" id="1.10.10.10:FF:000022">
    <property type="entry name" value="Histone acetyltransferase"/>
    <property type="match status" value="1"/>
</dbReference>
<dbReference type="FunFam" id="2.30.30.140:FF:000013">
    <property type="entry name" value="Histone acetyltransferase"/>
    <property type="match status" value="1"/>
</dbReference>
<dbReference type="FunFam" id="3.30.60.60:FF:000001">
    <property type="entry name" value="Histone acetyltransferase"/>
    <property type="match status" value="1"/>
</dbReference>
<dbReference type="FunFam" id="3.40.630.30:FF:000002">
    <property type="entry name" value="Histone acetyltransferase"/>
    <property type="match status" value="1"/>
</dbReference>
<dbReference type="Gene3D" id="2.30.30.140">
    <property type="match status" value="1"/>
</dbReference>
<dbReference type="Gene3D" id="3.40.630.30">
    <property type="match status" value="1"/>
</dbReference>
<dbReference type="Gene3D" id="3.30.60.60">
    <property type="entry name" value="N-acetyl transferase-like"/>
    <property type="match status" value="1"/>
</dbReference>
<dbReference type="Gene3D" id="1.10.10.10">
    <property type="entry name" value="Winged helix-like DNA-binding domain superfamily/Winged helix DNA-binding domain"/>
    <property type="match status" value="1"/>
</dbReference>
<dbReference type="InterPro" id="IPR016181">
    <property type="entry name" value="Acyl_CoA_acyltransferase"/>
</dbReference>
<dbReference type="InterPro" id="IPR016197">
    <property type="entry name" value="Chromo-like_dom_sf"/>
</dbReference>
<dbReference type="InterPro" id="IPR000953">
    <property type="entry name" value="Chromo/chromo_shadow_dom"/>
</dbReference>
<dbReference type="InterPro" id="IPR002717">
    <property type="entry name" value="HAT_MYST-type"/>
</dbReference>
<dbReference type="InterPro" id="IPR050603">
    <property type="entry name" value="MYST_HAT"/>
</dbReference>
<dbReference type="InterPro" id="IPR025995">
    <property type="entry name" value="Tudor-knot"/>
</dbReference>
<dbReference type="InterPro" id="IPR036388">
    <property type="entry name" value="WH-like_DNA-bd_sf"/>
</dbReference>
<dbReference type="InterPro" id="IPR040706">
    <property type="entry name" value="Zf-MYST"/>
</dbReference>
<dbReference type="PANTHER" id="PTHR10615">
    <property type="entry name" value="HISTONE ACETYLTRANSFERASE"/>
    <property type="match status" value="1"/>
</dbReference>
<dbReference type="PANTHER" id="PTHR10615:SF219">
    <property type="entry name" value="HISTONE ACETYLTRANSFERASE KAT5"/>
    <property type="match status" value="1"/>
</dbReference>
<dbReference type="Pfam" id="PF01853">
    <property type="entry name" value="MOZ_SAS"/>
    <property type="match status" value="1"/>
</dbReference>
<dbReference type="Pfam" id="PF11717">
    <property type="entry name" value="Tudor-knot"/>
    <property type="match status" value="1"/>
</dbReference>
<dbReference type="Pfam" id="PF17772">
    <property type="entry name" value="zf-MYST"/>
    <property type="match status" value="1"/>
</dbReference>
<dbReference type="SMART" id="SM00298">
    <property type="entry name" value="CHROMO"/>
    <property type="match status" value="1"/>
</dbReference>
<dbReference type="SUPFAM" id="SSF55729">
    <property type="entry name" value="Acyl-CoA N-acyltransferases (Nat)"/>
    <property type="match status" value="1"/>
</dbReference>
<dbReference type="SUPFAM" id="SSF54160">
    <property type="entry name" value="Chromo domain-like"/>
    <property type="match status" value="1"/>
</dbReference>
<dbReference type="PROSITE" id="PS51726">
    <property type="entry name" value="MYST_HAT"/>
    <property type="match status" value="1"/>
</dbReference>
<gene>
    <name evidence="11" type="primary">Kat5</name>
    <name type="synonym">Htatip</name>
    <name evidence="9" type="synonym">Tip60</name>
    <name type="synonym">Tip60b</name>
</gene>
<comment type="function">
    <text evidence="1 2">Catalytic subunit of the NuA4 histone acetyltransferase complex, a multiprotein complex involved in transcriptional activation of select genes principally by acetylation of nucleosomal histones H2A and H4. Histone acetylation alters nucleosome-DNA interactions and promotes interaction of the modified histones with other proteins which positively regulate transcription. The NuA4 histone acetyltransferase complex is required for the activation of transcriptional programs associated with proto-oncogene mediated growth induction, tumor suppressor mediated growth arrest and replicative senescence, apoptosis, and DNA repair. The NuA4 complex plays a direct role in repair of DNA double-strand breaks (DSBs) by promoting homologous recombination (HR): the complex inhibits TP53BP1 binding to chromatin via MBTD1, which recognizes and binds histone H4 trimethylated at 'Lys-20' (H4K20me), and KAT5 that catalyzes acetylation of 'Lys-15' of histone H2A (H2AK15ac), thereby blocking the ubiquitination mark required for TP53BP1 localization at DNA breaks. Also involved in DSB repair by mediating acetylation of 'Lys-5' of histone H2AX (H2AXK5ac), promoting NBN/NBS1 assembly at the sites of DNA damage (By similarity). The NuA4 complex plays a key role in hematopoietic stem cell maintenance and is required to maintain acetylated H2A.Z/H2AZ1 at MYC target genes. The NuA4 complex is also required for spermatid development by promoting acetylation of histones: histone hyperacetylation is required for histone replacement during the transition from round to elongating spermatids (By similarity). Component of a SWR1-like complex that specifically mediates the removal of histone H2A.Z/H2AZ1 from the nucleosome. Also acetylates non-histone proteins, such as BMAL1, ATM, AURKB, CHKA, CGAS, ERCC4/XPF, LPIN1, TP53/p53, NDC80/HEC1, NR1D2, RAN, SOX4, FOXP3, SQSTM1, ULK1 and RUBCNL/Pacer. Directly acetylates and activates ATM. Promotes nucleotide excision repair (NER) by mediating acetylation of ERCC4/XPF, thereby promoting formation of the ERCC4-ERCC1 complex. Relieves NR1D2-mediated inhibition of APOC3 expression by acetylating NR1D2. Acts as a regulator of regulatory T-cells (Treg) by catalyzing FOXP3 acetylation, thereby promoting FOXP3 transcriptional repressor activity. Involved in skeletal myoblast differentiation by mediating acetylation of SOX4. Catalyzes acetylation of APBB1/FE65, increasing its transcription activator activity (By similarity). Promotes transcription elongation during the activation phase of the circadian cycle by catalyzing acetylation of BMAL1, promoting elongation of circadian transcripts (By similarity). Together with GSK3 (GSK3A or GSK3B), acts as a regulator of autophagy: phosphorylated at Ser-86 by GSK3 under starvation conditions, leading to activate acetyltransferase activity and promote acetylation of key autophagy regulators, such as ULK1 and RUBCNL/Pacer. Acts as a regulator of the cGAS-STING innate antiviral response by catalyzing acetylation the N-terminus of CGAS, thereby promoting CGAS DNA-binding and activation. Also regulates lipid metabolism by mediating acetylation of CHKA or LPIN1. Promotes lipolysis of lipid droplets following glucose deprivation by mediating acetylation of isoform 1 of CHKA, thereby promoting monomerization of CHKA and its conversion into a tyrosine-protein kinase. Acts as a regulator of fatty-acid-induced triacylglycerol synthesis by catalyzing acetylation of LPIN1, thereby promoting the synthesis of diacylglycerol. In addition to protein acetyltransferase, can use different acyl-CoA substrates, such as (2E)-butenoyl-CoA (crotonyl-CoA), S-lactoyl-CoA (lactyl-CoA) and 2-hydroxyisobutanoyl-CoA (2-hydroxyisobutyryl-CoA), and is able to mediate protein crotonylation, lactylation and 2-hydroxyisobutyrylation, respectively. Acts as a key regulator of chromosome segregation and kinetochore-microtubule attachment during mitosis by mediating acetylation or crotonylation of target proteins. Catalyzes acetylation of AURKB at kinetochores, increasing AURKB activity and promoting accurate chromosome segregation in mitosis. Acetylates RAN during mitosis, promoting microtubule assembly at mitotic chromosomes. Acetylates NDC80/HEC1 during mitosis, promoting robust kinetochore-microtubule attachment. Catalyzes crotonylation of MAPRE1/EB1, thereby ensuring accurate spindle positioning in mitosis. Catalyzes lactylation of NBN/NBS1 in response to DNA damage, thereby promoting DNA double-strand breaks (DSBs) via homologous recombination (HR) (By similarity).</text>
</comment>
<comment type="catalytic activity">
    <reaction evidence="2">
        <text>L-lysyl-[histone] + acetyl-CoA = N(6)-acetyl-L-lysyl-[histone] + CoA + H(+)</text>
        <dbReference type="Rhea" id="RHEA:21992"/>
        <dbReference type="Rhea" id="RHEA-COMP:9845"/>
        <dbReference type="Rhea" id="RHEA-COMP:11338"/>
        <dbReference type="ChEBI" id="CHEBI:15378"/>
        <dbReference type="ChEBI" id="CHEBI:29969"/>
        <dbReference type="ChEBI" id="CHEBI:57287"/>
        <dbReference type="ChEBI" id="CHEBI:57288"/>
        <dbReference type="ChEBI" id="CHEBI:61930"/>
        <dbReference type="EC" id="2.3.1.48"/>
    </reaction>
    <physiologicalReaction direction="left-to-right" evidence="2">
        <dbReference type="Rhea" id="RHEA:21993"/>
    </physiologicalReaction>
</comment>
<comment type="catalytic activity">
    <reaction evidence="2">
        <text>L-lysyl-[protein] + acetyl-CoA = N(6)-acetyl-L-lysyl-[protein] + CoA + H(+)</text>
        <dbReference type="Rhea" id="RHEA:45948"/>
        <dbReference type="Rhea" id="RHEA-COMP:9752"/>
        <dbReference type="Rhea" id="RHEA-COMP:10731"/>
        <dbReference type="ChEBI" id="CHEBI:15378"/>
        <dbReference type="ChEBI" id="CHEBI:29969"/>
        <dbReference type="ChEBI" id="CHEBI:57287"/>
        <dbReference type="ChEBI" id="CHEBI:57288"/>
        <dbReference type="ChEBI" id="CHEBI:61930"/>
    </reaction>
    <physiologicalReaction direction="left-to-right" evidence="2">
        <dbReference type="Rhea" id="RHEA:45949"/>
    </physiologicalReaction>
</comment>
<comment type="catalytic activity">
    <reaction evidence="2">
        <text>(2E)-butenoyl-CoA + L-lysyl-[protein] = N(6)-(2E)-butenoyl-L-lysyl-[protein] + CoA + H(+)</text>
        <dbReference type="Rhea" id="RHEA:53908"/>
        <dbReference type="Rhea" id="RHEA-COMP:9752"/>
        <dbReference type="Rhea" id="RHEA-COMP:13707"/>
        <dbReference type="ChEBI" id="CHEBI:15378"/>
        <dbReference type="ChEBI" id="CHEBI:29969"/>
        <dbReference type="ChEBI" id="CHEBI:57287"/>
        <dbReference type="ChEBI" id="CHEBI:57332"/>
        <dbReference type="ChEBI" id="CHEBI:137954"/>
    </reaction>
    <physiologicalReaction direction="left-to-right" evidence="2">
        <dbReference type="Rhea" id="RHEA:53909"/>
    </physiologicalReaction>
</comment>
<comment type="catalytic activity">
    <reaction evidence="2">
        <text>2-hydroxyisobutanoyl-CoA + L-lysyl-[protein] = N(6)-(2-hydroxyisobutanoyl)-L-lysyl-[protein] + CoA + H(+)</text>
        <dbReference type="Rhea" id="RHEA:24180"/>
        <dbReference type="Rhea" id="RHEA-COMP:9752"/>
        <dbReference type="Rhea" id="RHEA-COMP:15921"/>
        <dbReference type="ChEBI" id="CHEBI:15378"/>
        <dbReference type="ChEBI" id="CHEBI:29969"/>
        <dbReference type="ChEBI" id="CHEBI:57287"/>
        <dbReference type="ChEBI" id="CHEBI:131780"/>
        <dbReference type="ChEBI" id="CHEBI:144968"/>
    </reaction>
    <physiologicalReaction direction="left-to-right" evidence="2">
        <dbReference type="Rhea" id="RHEA:24181"/>
    </physiologicalReaction>
</comment>
<comment type="catalytic activity">
    <reaction evidence="2">
        <text>(S)-lactoyl-CoA + L-lysyl-[protein] = N(6)-[(S)-lactoyl]-L-lysyl-[protein] + CoA + H(+)</text>
        <dbReference type="Rhea" id="RHEA:61996"/>
        <dbReference type="Rhea" id="RHEA-COMP:9752"/>
        <dbReference type="Rhea" id="RHEA-COMP:19466"/>
        <dbReference type="ChEBI" id="CHEBI:15378"/>
        <dbReference type="ChEBI" id="CHEBI:29969"/>
        <dbReference type="ChEBI" id="CHEBI:57287"/>
        <dbReference type="ChEBI" id="CHEBI:231527"/>
        <dbReference type="ChEBI" id="CHEBI:231528"/>
    </reaction>
    <physiologicalReaction direction="left-to-right" evidence="2">
        <dbReference type="Rhea" id="RHEA:61997"/>
    </physiologicalReaction>
</comment>
<comment type="activity regulation">
    <text evidence="2">Acyltransferase and acetyltransferase activities are activated by phosphorylation and autoacetylation. Autoacetylation activates the histone acetyltransferase activity.</text>
</comment>
<comment type="subunit">
    <text evidence="1 2 7 8">Component of the NuA4 histone acetyltransferase complex which contains the catalytic subunit KAT5/TIP60 and the subunits EP400, TRRAP/PAF400, BRD8/SMAP, EPC1, DMAP1/DNMAP1, RUVBL1/TIP49, RUVBL2, ING3, actin, ACTL6A/BAF53A, MORF4L1/MRG15, MORF4L2/MRGX, MRGBP, YEATS4/GAS41, VPS72/YL1 and MEAF6 (By similarity). KAT5/TIP60, EPC1, and ING3 together constitute a minimal HAT complex termed Piccolo NuA4 (By similarity). The NuA4 complex interacts with MYC (By similarity). Interacts with ATM (By similarity). Interacts with JADE1 (By similarity). Interacts with PLA2G4A/CPLA2, EDNRA and HDAC7 (By similarity). Interacts with the cytoplasmic tail of APP and APBB1/FE65 (PubMed:11441186, PubMed:19282473). Interacts with TRIM24 and TRIM68 (By similarity). Forms a complex with SENP6 and UBE2I in response to UV irradiation (By similarity). Identified in a complex with HINT1 (By similarity). Interacts with ATF2 and CUL3 (By similarity). Interacts with NR1D2 (via N-terminus) (By similarity). Component of a SWR1-like complex (By similarity). Interacts with FOXP3 (By similarity). Interacts with ZBTB49 (By similarity). Interacts with SRF (By similarity). Interacts with ATF3; promoting autoacetylation and deubiquitination by USP7 (By similarity). Interacts with EP300/p300; interaction promotes KAT5 autoacetylation (By similarity). Interacts with PRKDC; interaction is impaired following KAT5 sumoylation (By similarity). Interacts with GPR50 (By similarity). Interacts with NME3; this interaction enables recruitment of NME3 at DNA damage sites where it plays a role in the repair of DNA (By similarity).</text>
</comment>
<comment type="subcellular location">
    <subcellularLocation>
        <location evidence="2">Nucleus</location>
    </subcellularLocation>
    <subcellularLocation>
        <location evidence="2">Chromosome</location>
    </subcellularLocation>
    <subcellularLocation>
        <location evidence="2">Cytoplasm</location>
    </subcellularLocation>
    <subcellularLocation>
        <location evidence="2">Chromosome</location>
        <location evidence="2">Centromere</location>
        <location evidence="2">Kinetochore</location>
    </subcellularLocation>
    <subcellularLocation>
        <location evidence="2">Cytoplasm</location>
        <location evidence="2">Cytoskeleton</location>
        <location evidence="2">Spindle pole</location>
    </subcellularLocation>
    <subcellularLocation>
        <location evidence="2">Nucleus</location>
        <location evidence="2">Nucleolus</location>
    </subcellularLocation>
    <subcellularLocation>
        <location evidence="2">Cytoplasm</location>
        <location evidence="2">Perinuclear region</location>
    </subcellularLocation>
    <text evidence="1 2">Upon stimulation with EDN1, it is exported from the nucleus to the perinuclear region and UV irradiation induces translocation into punctuate subnuclear structures named nuclear bodies. Transiently localizes to kinetochores in early mitosis. Localizes to spindle poles when chromosomes align during metaphase (By similarity). Localizes in the cytoplasm and nucleus of round spermatids (By similarity).</text>
</comment>
<comment type="alternative products">
    <event type="alternative splicing"/>
    <isoform>
        <id>Q99MK2-1</id>
        <name>1</name>
        <sequence type="displayed"/>
    </isoform>
    <isoform>
        <id>Q99MK2-2</id>
        <name>2</name>
        <sequence type="described" ref="VSP_019781"/>
    </isoform>
</comment>
<comment type="PTM">
    <text evidence="2">Phosphorylated on Ser-86 and Ser-90; enhanced during G2/M phase. The phosphorylated form has a higher activity. Phosphorylation at Ser-90 by CDK1 or CDK9 is a prerequisite for phosphorylation at Ser-86 by GSK3. Phosphorylation at Ser-86 by GSK3 (GSK3A or GSK3B) activates acetyltransferase and acyltransferase activities. Phosphorylation at Ser-90 by CDK9 promotes KAT5 recruitment to chromatin. Phosphorylation by VRK1 following DNA damage promotes KAT5 association with chromatin and histone acetyltransferase activity.</text>
</comment>
<comment type="PTM">
    <text evidence="2">Autoacetylated. Autoacetylation is required for histone acetyltransferase activity. Autoacetylation at Lys-327 is facilitated by interaction with EP300/p300: it prevents ubiquitination and subsequent degradation by the proteasome and promotes acetylation of target proteins. Deacetylated by HDAC3 and SIRT1. Deacetylation by HDAC3 promotes its ubiquitination and cytoplasmic localization.</text>
</comment>
<comment type="PTM">
    <text evidence="2">Sumoylated by UBE2I at Lys-430 and Lys-451, leading to increase of its histone acetyltransferase activity in UV-induced DNA damage response, as well as its translocation to nuclear bodies. Sumoylation with SUMO2 by PIAS4 at Lys-430 promotes repair of DNA double-strand breaks (DSBs) via homologous recombination (HR). Sumoylation by PIAS4 impairs interaction with PRKDC, inhibiting non-homologous end joining (NHEJ)-mediated repair of DSBs, thereby facilitating HR. Desumoylated by SENP3.</text>
</comment>
<comment type="PTM">
    <text evidence="2">Ubiquitinated by MDM2, leading to its proteasome-dependent degradation. Ubiquitination is prevented by autoacetylation at Lys-327. Ubiquitinated following deacetylation by HDAC3, leading to cytoplasmic localization. Deubiquitinated by USP7 following interaction with ATF3, promoting its stabilization.</text>
</comment>
<comment type="similarity">
    <text evidence="10">Belongs to the MYST (SAS/MOZ) family.</text>
</comment>
<accession>Q99MK2</accession>
<accession>Q5XI16</accession>
<keyword id="KW-0007">Acetylation</keyword>
<keyword id="KW-0010">Activator</keyword>
<keyword id="KW-0012">Acyltransferase</keyword>
<keyword id="KW-0025">Alternative splicing</keyword>
<keyword id="KW-0137">Centromere</keyword>
<keyword id="KW-0158">Chromosome</keyword>
<keyword id="KW-0963">Cytoplasm</keyword>
<keyword id="KW-0206">Cytoskeleton</keyword>
<keyword id="KW-0227">DNA damage</keyword>
<keyword id="KW-0234">DNA repair</keyword>
<keyword id="KW-0391">Immunity</keyword>
<keyword id="KW-0399">Innate immunity</keyword>
<keyword id="KW-1017">Isopeptide bond</keyword>
<keyword id="KW-0995">Kinetochore</keyword>
<keyword id="KW-0479">Metal-binding</keyword>
<keyword id="KW-0539">Nucleus</keyword>
<keyword id="KW-0597">Phosphoprotein</keyword>
<keyword id="KW-1185">Reference proteome</keyword>
<keyword id="KW-0804">Transcription</keyword>
<keyword id="KW-0805">Transcription regulation</keyword>
<keyword id="KW-0808">Transferase</keyword>
<keyword id="KW-0832">Ubl conjugation</keyword>
<keyword id="KW-0862">Zinc</keyword>
<keyword id="KW-0863">Zinc-finger</keyword>
<sequence length="513" mass="58598">MAEVGEIIEGCRLPVLRRNQDNEDEWPLAEILSVKDISGRKLFYVHYIDFNKRLDEWVTHERLDLKKIQFPKKEAKTPTKNGLPGSRPGSPEREVPASAQASGKTLPIPVQITLRFNLPKEREAIPGGEPDQPLSSSSCLQPNHRSTKRKVEVVSPATPVPSETAPASVFPQNGSARRAVAAQPGRKRKSNCLGTDEDSQDSSDGIPSAPRMTGSLVSDRSHDDIVTRMKNIECIELGRHRLKPWYFSPYPQELTTLPVLYLCEFCLKYGRSLKCLQRHLTKCDLRHPPGNEIYRKGTISFFEIDGRKNKSYSQNLCLLAKCFLDHKTLYYDTDPFLFYVMTEYDCKGFHIVGYFSKEKESTEDYNVACILTLPPYQRRGYGKLLIEFSYELSKVEGKTGTPEKPLSDLGLLSYRSYWSQTILEILMGLKSESGERPQITINEISEITSIKKEDVISTLQYLNLINYYKGQYILTLSEDIVDGHERAMLKRLLRIDSKCLHFTPKDWSKRGKW</sequence>
<organism>
    <name type="scientific">Rattus norvegicus</name>
    <name type="common">Rat</name>
    <dbReference type="NCBI Taxonomy" id="10116"/>
    <lineage>
        <taxon>Eukaryota</taxon>
        <taxon>Metazoa</taxon>
        <taxon>Chordata</taxon>
        <taxon>Craniata</taxon>
        <taxon>Vertebrata</taxon>
        <taxon>Euteleostomi</taxon>
        <taxon>Mammalia</taxon>
        <taxon>Eutheria</taxon>
        <taxon>Euarchontoglires</taxon>
        <taxon>Glires</taxon>
        <taxon>Rodentia</taxon>
        <taxon>Myomorpha</taxon>
        <taxon>Muroidea</taxon>
        <taxon>Muridae</taxon>
        <taxon>Murinae</taxon>
        <taxon>Rattus</taxon>
    </lineage>
</organism>
<protein>
    <recommendedName>
        <fullName evidence="10">Histone acetyltransferase KAT5</fullName>
        <ecNumber evidence="2">2.3.1.48</ecNumber>
    </recommendedName>
    <alternativeName>
        <fullName evidence="9">60 kDa Tat-interactive protein</fullName>
        <shortName evidence="9">Tip60</shortName>
    </alternativeName>
    <alternativeName>
        <fullName>Histone acetyltransferase HTATIP</fullName>
    </alternativeName>
    <alternativeName>
        <fullName>Lysine acetyltransferase 5</fullName>
    </alternativeName>
    <alternativeName>
        <fullName evidence="10">Protein 2-hydroxyisobutyryltransferase KAT5</fullName>
        <ecNumber evidence="2">2.3.1.-</ecNumber>
    </alternativeName>
    <alternativeName>
        <fullName evidence="10">Protein acetyltransferase KAT5</fullName>
        <ecNumber evidence="2">2.3.1.-</ecNumber>
    </alternativeName>
    <alternativeName>
        <fullName evidence="10">Protein crotonyltransferase KAT5</fullName>
        <ecNumber evidence="2">2.3.1.-</ecNumber>
    </alternativeName>
    <alternativeName>
        <fullName evidence="10">Protein lactyltransferase KAT5</fullName>
        <ecNumber evidence="2">2.3.1.-</ecNumber>
    </alternativeName>
</protein>
<reference key="1">
    <citation type="journal article" date="2004" name="Genome Res.">
        <title>The status, quality, and expansion of the NIH full-length cDNA project: the Mammalian Gene Collection (MGC).</title>
        <authorList>
            <consortium name="The MGC Project Team"/>
        </authorList>
    </citation>
    <scope>NUCLEOTIDE SEQUENCE [LARGE SCALE MRNA] (ISOFORM 1)</scope>
    <source>
        <tissue>Kidney</tissue>
    </source>
</reference>
<reference key="2">
    <citation type="journal article" date="2001" name="Science">
        <title>A transcriptionally active complex of APP with Fe65 and histone acetyltransferase Tip60.</title>
        <authorList>
            <person name="Cao X."/>
            <person name="Suedhof T.C."/>
        </authorList>
    </citation>
    <scope>NUCLEOTIDE SEQUENCE [MRNA] OF 63-506 (ISOFORM 2)</scope>
    <scope>INTERACTION WITH APP</scope>
</reference>
<reference key="3">
    <citation type="journal article" date="2009" name="Proc. Natl. Acad. Sci. U.S.A.">
        <title>Fe65 is required for Tip60-directed histone H4 acetylation at DNA strand breaks.</title>
        <authorList>
            <person name="Stante M."/>
            <person name="Minopoli G."/>
            <person name="Passaro F."/>
            <person name="Raia M."/>
            <person name="Vecchio L.D."/>
            <person name="Russo T."/>
        </authorList>
    </citation>
    <scope>INTERACTION WITH APBB1</scope>
</reference>